<comment type="similarity">
    <text evidence="1">Belongs to the bacterial ribosomal protein bL35 family.</text>
</comment>
<keyword id="KW-0687">Ribonucleoprotein</keyword>
<keyword id="KW-0689">Ribosomal protein</keyword>
<sequence length="65" mass="7608">MKVKMKTKRGAAKRFKKTANGFKRKQAFKRHILTKKSPKRIRQLRGTKLVHVADVAAVRRMCPYI</sequence>
<accession>A5WHW7</accession>
<reference key="1">
    <citation type="submission" date="2007-05" db="EMBL/GenBank/DDBJ databases">
        <title>Complete sequence of chromosome of Psychrobacter sp. PRwf-1.</title>
        <authorList>
            <consortium name="US DOE Joint Genome Institute"/>
            <person name="Copeland A."/>
            <person name="Lucas S."/>
            <person name="Lapidus A."/>
            <person name="Barry K."/>
            <person name="Detter J.C."/>
            <person name="Glavina del Rio T."/>
            <person name="Hammon N."/>
            <person name="Israni S."/>
            <person name="Dalin E."/>
            <person name="Tice H."/>
            <person name="Pitluck S."/>
            <person name="Chain P."/>
            <person name="Malfatti S."/>
            <person name="Shin M."/>
            <person name="Vergez L."/>
            <person name="Schmutz J."/>
            <person name="Larimer F."/>
            <person name="Land M."/>
            <person name="Hauser L."/>
            <person name="Kyrpides N."/>
            <person name="Kim E."/>
            <person name="Tiedje J."/>
            <person name="Richardson P."/>
        </authorList>
    </citation>
    <scope>NUCLEOTIDE SEQUENCE [LARGE SCALE GENOMIC DNA]</scope>
    <source>
        <strain>PRwf-1</strain>
    </source>
</reference>
<organism>
    <name type="scientific">Psychrobacter sp. (strain PRwf-1)</name>
    <dbReference type="NCBI Taxonomy" id="349106"/>
    <lineage>
        <taxon>Bacteria</taxon>
        <taxon>Pseudomonadati</taxon>
        <taxon>Pseudomonadota</taxon>
        <taxon>Gammaproteobacteria</taxon>
        <taxon>Moraxellales</taxon>
        <taxon>Moraxellaceae</taxon>
        <taxon>Psychrobacter</taxon>
    </lineage>
</organism>
<protein>
    <recommendedName>
        <fullName evidence="1">Large ribosomal subunit protein bL35</fullName>
    </recommendedName>
    <alternativeName>
        <fullName evidence="2">50S ribosomal protein L35</fullName>
    </alternativeName>
</protein>
<gene>
    <name evidence="1" type="primary">rpmI</name>
    <name type="ordered locus">PsycPRwf_2318</name>
</gene>
<feature type="chain" id="PRO_1000072480" description="Large ribosomal subunit protein bL35">
    <location>
        <begin position="1"/>
        <end position="65"/>
    </location>
</feature>
<dbReference type="EMBL" id="CP000713">
    <property type="protein sequence ID" value="ABQ95258.1"/>
    <property type="molecule type" value="Genomic_DNA"/>
</dbReference>
<dbReference type="SMR" id="A5WHW7"/>
<dbReference type="STRING" id="349106.PsycPRwf_2318"/>
<dbReference type="KEGG" id="prw:PsycPRwf_2318"/>
<dbReference type="eggNOG" id="COG0291">
    <property type="taxonomic scope" value="Bacteria"/>
</dbReference>
<dbReference type="HOGENOM" id="CLU_169643_1_1_6"/>
<dbReference type="GO" id="GO:0022625">
    <property type="term" value="C:cytosolic large ribosomal subunit"/>
    <property type="evidence" value="ECO:0007669"/>
    <property type="project" value="TreeGrafter"/>
</dbReference>
<dbReference type="GO" id="GO:0003735">
    <property type="term" value="F:structural constituent of ribosome"/>
    <property type="evidence" value="ECO:0007669"/>
    <property type="project" value="InterPro"/>
</dbReference>
<dbReference type="GO" id="GO:0006412">
    <property type="term" value="P:translation"/>
    <property type="evidence" value="ECO:0007669"/>
    <property type="project" value="UniProtKB-UniRule"/>
</dbReference>
<dbReference type="FunFam" id="4.10.410.60:FF:000001">
    <property type="entry name" value="50S ribosomal protein L35"/>
    <property type="match status" value="1"/>
</dbReference>
<dbReference type="Gene3D" id="4.10.410.60">
    <property type="match status" value="1"/>
</dbReference>
<dbReference type="HAMAP" id="MF_00514">
    <property type="entry name" value="Ribosomal_bL35"/>
    <property type="match status" value="1"/>
</dbReference>
<dbReference type="InterPro" id="IPR001706">
    <property type="entry name" value="Ribosomal_bL35"/>
</dbReference>
<dbReference type="InterPro" id="IPR021137">
    <property type="entry name" value="Ribosomal_bL35-like"/>
</dbReference>
<dbReference type="InterPro" id="IPR018265">
    <property type="entry name" value="Ribosomal_bL35_CS"/>
</dbReference>
<dbReference type="InterPro" id="IPR037229">
    <property type="entry name" value="Ribosomal_bL35_sf"/>
</dbReference>
<dbReference type="NCBIfam" id="TIGR00001">
    <property type="entry name" value="rpmI_bact"/>
    <property type="match status" value="1"/>
</dbReference>
<dbReference type="PANTHER" id="PTHR33343">
    <property type="entry name" value="54S RIBOSOMAL PROTEIN BL35M"/>
    <property type="match status" value="1"/>
</dbReference>
<dbReference type="PANTHER" id="PTHR33343:SF1">
    <property type="entry name" value="LARGE RIBOSOMAL SUBUNIT PROTEIN BL35M"/>
    <property type="match status" value="1"/>
</dbReference>
<dbReference type="Pfam" id="PF01632">
    <property type="entry name" value="Ribosomal_L35p"/>
    <property type="match status" value="1"/>
</dbReference>
<dbReference type="PRINTS" id="PR00064">
    <property type="entry name" value="RIBOSOMALL35"/>
</dbReference>
<dbReference type="SUPFAM" id="SSF143034">
    <property type="entry name" value="L35p-like"/>
    <property type="match status" value="1"/>
</dbReference>
<dbReference type="PROSITE" id="PS00936">
    <property type="entry name" value="RIBOSOMAL_L35"/>
    <property type="match status" value="1"/>
</dbReference>
<proteinExistence type="inferred from homology"/>
<evidence type="ECO:0000255" key="1">
    <source>
        <dbReference type="HAMAP-Rule" id="MF_00514"/>
    </source>
</evidence>
<evidence type="ECO:0000305" key="2"/>
<name>RL35_PSYWF</name>